<comment type="function">
    <text evidence="1">Catalyzes the conversion of glucosamine-6-phosphate to glucosamine-1-phosphate.</text>
</comment>
<comment type="catalytic activity">
    <reaction evidence="1">
        <text>alpha-D-glucosamine 1-phosphate = D-glucosamine 6-phosphate</text>
        <dbReference type="Rhea" id="RHEA:23424"/>
        <dbReference type="ChEBI" id="CHEBI:58516"/>
        <dbReference type="ChEBI" id="CHEBI:58725"/>
        <dbReference type="EC" id="5.4.2.10"/>
    </reaction>
</comment>
<comment type="cofactor">
    <cofactor evidence="1">
        <name>Mg(2+)</name>
        <dbReference type="ChEBI" id="CHEBI:18420"/>
    </cofactor>
    <text evidence="1">Binds 1 Mg(2+) ion per subunit.</text>
</comment>
<comment type="PTM">
    <text evidence="1">Activated by phosphorylation.</text>
</comment>
<comment type="similarity">
    <text evidence="1">Belongs to the phosphohexose mutase family.</text>
</comment>
<comment type="sequence caution" evidence="2">
    <conflict type="erroneous initiation">
        <sequence resource="EMBL-CDS" id="ABN96964"/>
    </conflict>
</comment>
<name>GLMM_MYCSJ</name>
<sequence length="445" mass="45999">MARLFGTDGVRGVANRDLTAELALALGSAAARRLSTAGHARRRVAVVGRDPRASGEMLEAAVIAGLTSEGVDALRVGVLPTPAVAYLTSAYDADFGVMISASHNPMPDNGIKIFGPGGHKLDDATEDRIAELVQQGPGERPVGAGIGRVVDAPDALDRYLRHVGKAVTTRLDALTVVVDCAHGAASAAAPLAYRAAGANVLTINADPNGLNINDGCGSTHMETLQAAVVSYGADLGLAHDGDADRCLAVDANGRVIDGDAIMVVLALAMRESGELASDTLVATVMSNLGLHLAMRDAGIEVRTTSVGDRYVLEELRAGSYSLGGEQSGHIVMPSMGTTGDGILTGLRLMSRMAQTRKSLAALAEPMHTLPQVLINVQVADKTTVAQAPSVQSAVAEAEAALGDTGRILLRPSGTEQVVRVMVEAADEDTARQLAVRVAESVSEQR</sequence>
<organism>
    <name type="scientific">Mycobacterium sp. (strain JLS)</name>
    <dbReference type="NCBI Taxonomy" id="164757"/>
    <lineage>
        <taxon>Bacteria</taxon>
        <taxon>Bacillati</taxon>
        <taxon>Actinomycetota</taxon>
        <taxon>Actinomycetes</taxon>
        <taxon>Mycobacteriales</taxon>
        <taxon>Mycobacteriaceae</taxon>
        <taxon>Mycobacterium</taxon>
    </lineage>
</organism>
<protein>
    <recommendedName>
        <fullName evidence="1">Phosphoglucosamine mutase</fullName>
        <ecNumber evidence="1">5.4.2.10</ecNumber>
    </recommendedName>
</protein>
<keyword id="KW-0413">Isomerase</keyword>
<keyword id="KW-0460">Magnesium</keyword>
<keyword id="KW-0479">Metal-binding</keyword>
<keyword id="KW-0597">Phosphoprotein</keyword>
<proteinExistence type="inferred from homology"/>
<gene>
    <name evidence="1" type="primary">glmM</name>
    <name type="ordered locus">Mjls_1161</name>
</gene>
<feature type="chain" id="PRO_0000305653" description="Phosphoglucosamine mutase">
    <location>
        <begin position="1"/>
        <end position="445"/>
    </location>
</feature>
<feature type="active site" description="Phosphoserine intermediate" evidence="1">
    <location>
        <position position="102"/>
    </location>
</feature>
<feature type="binding site" description="via phosphate group" evidence="1">
    <location>
        <position position="102"/>
    </location>
    <ligand>
        <name>Mg(2+)</name>
        <dbReference type="ChEBI" id="CHEBI:18420"/>
    </ligand>
</feature>
<feature type="binding site" evidence="1">
    <location>
        <position position="240"/>
    </location>
    <ligand>
        <name>Mg(2+)</name>
        <dbReference type="ChEBI" id="CHEBI:18420"/>
    </ligand>
</feature>
<feature type="binding site" evidence="1">
    <location>
        <position position="242"/>
    </location>
    <ligand>
        <name>Mg(2+)</name>
        <dbReference type="ChEBI" id="CHEBI:18420"/>
    </ligand>
</feature>
<feature type="binding site" evidence="1">
    <location>
        <position position="244"/>
    </location>
    <ligand>
        <name>Mg(2+)</name>
        <dbReference type="ChEBI" id="CHEBI:18420"/>
    </ligand>
</feature>
<feature type="modified residue" description="Phosphoserine" evidence="1">
    <location>
        <position position="102"/>
    </location>
</feature>
<accession>A3PVN7</accession>
<evidence type="ECO:0000255" key="1">
    <source>
        <dbReference type="HAMAP-Rule" id="MF_01554"/>
    </source>
</evidence>
<evidence type="ECO:0000305" key="2"/>
<reference key="1">
    <citation type="submission" date="2007-02" db="EMBL/GenBank/DDBJ databases">
        <title>Complete sequence of Mycobacterium sp. JLS.</title>
        <authorList>
            <consortium name="US DOE Joint Genome Institute"/>
            <person name="Copeland A."/>
            <person name="Lucas S."/>
            <person name="Lapidus A."/>
            <person name="Barry K."/>
            <person name="Detter J.C."/>
            <person name="Glavina del Rio T."/>
            <person name="Hammon N."/>
            <person name="Israni S."/>
            <person name="Dalin E."/>
            <person name="Tice H."/>
            <person name="Pitluck S."/>
            <person name="Chain P."/>
            <person name="Malfatti S."/>
            <person name="Shin M."/>
            <person name="Vergez L."/>
            <person name="Schmutz J."/>
            <person name="Larimer F."/>
            <person name="Land M."/>
            <person name="Hauser L."/>
            <person name="Kyrpides N."/>
            <person name="Mikhailova N."/>
            <person name="Miller C.D."/>
            <person name="Anderson A.J."/>
            <person name="Sims R.C."/>
            <person name="Richardson P."/>
        </authorList>
    </citation>
    <scope>NUCLEOTIDE SEQUENCE [LARGE SCALE GENOMIC DNA]</scope>
    <source>
        <strain>JLS</strain>
    </source>
</reference>
<dbReference type="EC" id="5.4.2.10" evidence="1"/>
<dbReference type="EMBL" id="CP000580">
    <property type="protein sequence ID" value="ABN96964.1"/>
    <property type="status" value="ALT_INIT"/>
    <property type="molecule type" value="Genomic_DNA"/>
</dbReference>
<dbReference type="SMR" id="A3PVN7"/>
<dbReference type="KEGG" id="mjl:Mjls_1161"/>
<dbReference type="HOGENOM" id="CLU_016950_7_0_11"/>
<dbReference type="BioCyc" id="MSP164757:G1G8C-1173-MONOMER"/>
<dbReference type="GO" id="GO:0005829">
    <property type="term" value="C:cytosol"/>
    <property type="evidence" value="ECO:0007669"/>
    <property type="project" value="TreeGrafter"/>
</dbReference>
<dbReference type="GO" id="GO:0000287">
    <property type="term" value="F:magnesium ion binding"/>
    <property type="evidence" value="ECO:0007669"/>
    <property type="project" value="UniProtKB-UniRule"/>
</dbReference>
<dbReference type="GO" id="GO:0008966">
    <property type="term" value="F:phosphoglucosamine mutase activity"/>
    <property type="evidence" value="ECO:0007669"/>
    <property type="project" value="UniProtKB-UniRule"/>
</dbReference>
<dbReference type="GO" id="GO:0004615">
    <property type="term" value="F:phosphomannomutase activity"/>
    <property type="evidence" value="ECO:0007669"/>
    <property type="project" value="TreeGrafter"/>
</dbReference>
<dbReference type="GO" id="GO:0005975">
    <property type="term" value="P:carbohydrate metabolic process"/>
    <property type="evidence" value="ECO:0007669"/>
    <property type="project" value="InterPro"/>
</dbReference>
<dbReference type="GO" id="GO:0009252">
    <property type="term" value="P:peptidoglycan biosynthetic process"/>
    <property type="evidence" value="ECO:0007669"/>
    <property type="project" value="TreeGrafter"/>
</dbReference>
<dbReference type="GO" id="GO:0006048">
    <property type="term" value="P:UDP-N-acetylglucosamine biosynthetic process"/>
    <property type="evidence" value="ECO:0007669"/>
    <property type="project" value="TreeGrafter"/>
</dbReference>
<dbReference type="CDD" id="cd05802">
    <property type="entry name" value="GlmM"/>
    <property type="match status" value="1"/>
</dbReference>
<dbReference type="FunFam" id="3.30.310.50:FF:000001">
    <property type="entry name" value="Phosphoglucosamine mutase"/>
    <property type="match status" value="1"/>
</dbReference>
<dbReference type="FunFam" id="3.40.120.10:FF:000001">
    <property type="entry name" value="Phosphoglucosamine mutase"/>
    <property type="match status" value="1"/>
</dbReference>
<dbReference type="FunFam" id="3.40.120.10:FF:000002">
    <property type="entry name" value="Phosphoglucosamine mutase"/>
    <property type="match status" value="1"/>
</dbReference>
<dbReference type="Gene3D" id="3.40.120.10">
    <property type="entry name" value="Alpha-D-Glucose-1,6-Bisphosphate, subunit A, domain 3"/>
    <property type="match status" value="3"/>
</dbReference>
<dbReference type="Gene3D" id="3.30.310.50">
    <property type="entry name" value="Alpha-D-phosphohexomutase, C-terminal domain"/>
    <property type="match status" value="1"/>
</dbReference>
<dbReference type="HAMAP" id="MF_01554_B">
    <property type="entry name" value="GlmM_B"/>
    <property type="match status" value="1"/>
</dbReference>
<dbReference type="InterPro" id="IPR005844">
    <property type="entry name" value="A-D-PHexomutase_a/b/a-I"/>
</dbReference>
<dbReference type="InterPro" id="IPR016055">
    <property type="entry name" value="A-D-PHexomutase_a/b/a-I/II/III"/>
</dbReference>
<dbReference type="InterPro" id="IPR005845">
    <property type="entry name" value="A-D-PHexomutase_a/b/a-II"/>
</dbReference>
<dbReference type="InterPro" id="IPR005846">
    <property type="entry name" value="A-D-PHexomutase_a/b/a-III"/>
</dbReference>
<dbReference type="InterPro" id="IPR005843">
    <property type="entry name" value="A-D-PHexomutase_C"/>
</dbReference>
<dbReference type="InterPro" id="IPR036900">
    <property type="entry name" value="A-D-PHexomutase_C_sf"/>
</dbReference>
<dbReference type="InterPro" id="IPR016066">
    <property type="entry name" value="A-D-PHexomutase_CS"/>
</dbReference>
<dbReference type="InterPro" id="IPR005841">
    <property type="entry name" value="Alpha-D-phosphohexomutase_SF"/>
</dbReference>
<dbReference type="InterPro" id="IPR006352">
    <property type="entry name" value="GlmM_bact"/>
</dbReference>
<dbReference type="InterPro" id="IPR050060">
    <property type="entry name" value="Phosphoglucosamine_mutase"/>
</dbReference>
<dbReference type="NCBIfam" id="TIGR01455">
    <property type="entry name" value="glmM"/>
    <property type="match status" value="1"/>
</dbReference>
<dbReference type="PANTHER" id="PTHR42946:SF1">
    <property type="entry name" value="PHOSPHOGLUCOMUTASE (ALPHA-D-GLUCOSE-1,6-BISPHOSPHATE-DEPENDENT)"/>
    <property type="match status" value="1"/>
</dbReference>
<dbReference type="PANTHER" id="PTHR42946">
    <property type="entry name" value="PHOSPHOHEXOSE MUTASE"/>
    <property type="match status" value="1"/>
</dbReference>
<dbReference type="Pfam" id="PF02878">
    <property type="entry name" value="PGM_PMM_I"/>
    <property type="match status" value="1"/>
</dbReference>
<dbReference type="Pfam" id="PF02879">
    <property type="entry name" value="PGM_PMM_II"/>
    <property type="match status" value="1"/>
</dbReference>
<dbReference type="Pfam" id="PF02880">
    <property type="entry name" value="PGM_PMM_III"/>
    <property type="match status" value="1"/>
</dbReference>
<dbReference type="Pfam" id="PF00408">
    <property type="entry name" value="PGM_PMM_IV"/>
    <property type="match status" value="1"/>
</dbReference>
<dbReference type="PRINTS" id="PR00509">
    <property type="entry name" value="PGMPMM"/>
</dbReference>
<dbReference type="SUPFAM" id="SSF55957">
    <property type="entry name" value="Phosphoglucomutase, C-terminal domain"/>
    <property type="match status" value="1"/>
</dbReference>
<dbReference type="SUPFAM" id="SSF53738">
    <property type="entry name" value="Phosphoglucomutase, first 3 domains"/>
    <property type="match status" value="3"/>
</dbReference>
<dbReference type="PROSITE" id="PS00710">
    <property type="entry name" value="PGM_PMM"/>
    <property type="match status" value="1"/>
</dbReference>